<keyword id="KW-0963">Cytoplasm</keyword>
<keyword id="KW-0238">DNA-binding</keyword>
<protein>
    <recommendedName>
        <fullName evidence="1">Nucleoid-associated protein Bcenmc03_1850</fullName>
    </recommendedName>
</protein>
<accession>B1JTA6</accession>
<proteinExistence type="inferred from homology"/>
<dbReference type="EMBL" id="CP000958">
    <property type="protein sequence ID" value="ACA91011.1"/>
    <property type="molecule type" value="Genomic_DNA"/>
</dbReference>
<dbReference type="RefSeq" id="WP_006482124.1">
    <property type="nucleotide sequence ID" value="NC_010508.1"/>
</dbReference>
<dbReference type="SMR" id="B1JTA6"/>
<dbReference type="KEGG" id="bcm:Bcenmc03_1850"/>
<dbReference type="HOGENOM" id="CLU_140930_0_0_4"/>
<dbReference type="Proteomes" id="UP000002169">
    <property type="component" value="Chromosome 1"/>
</dbReference>
<dbReference type="GO" id="GO:0043590">
    <property type="term" value="C:bacterial nucleoid"/>
    <property type="evidence" value="ECO:0007669"/>
    <property type="project" value="UniProtKB-UniRule"/>
</dbReference>
<dbReference type="GO" id="GO:0005829">
    <property type="term" value="C:cytosol"/>
    <property type="evidence" value="ECO:0007669"/>
    <property type="project" value="TreeGrafter"/>
</dbReference>
<dbReference type="GO" id="GO:0003677">
    <property type="term" value="F:DNA binding"/>
    <property type="evidence" value="ECO:0007669"/>
    <property type="project" value="UniProtKB-UniRule"/>
</dbReference>
<dbReference type="FunFam" id="3.30.1310.10:FF:000001">
    <property type="entry name" value="Nucleoid-associated protein YbaB"/>
    <property type="match status" value="1"/>
</dbReference>
<dbReference type="Gene3D" id="3.30.1310.10">
    <property type="entry name" value="Nucleoid-associated protein YbaB-like domain"/>
    <property type="match status" value="1"/>
</dbReference>
<dbReference type="HAMAP" id="MF_00274">
    <property type="entry name" value="DNA_YbaB_EbfC"/>
    <property type="match status" value="1"/>
</dbReference>
<dbReference type="InterPro" id="IPR036894">
    <property type="entry name" value="YbaB-like_sf"/>
</dbReference>
<dbReference type="InterPro" id="IPR004401">
    <property type="entry name" value="YbaB/EbfC"/>
</dbReference>
<dbReference type="NCBIfam" id="TIGR00103">
    <property type="entry name" value="DNA_YbaB_EbfC"/>
    <property type="match status" value="1"/>
</dbReference>
<dbReference type="PANTHER" id="PTHR33449">
    <property type="entry name" value="NUCLEOID-ASSOCIATED PROTEIN YBAB"/>
    <property type="match status" value="1"/>
</dbReference>
<dbReference type="PANTHER" id="PTHR33449:SF1">
    <property type="entry name" value="NUCLEOID-ASSOCIATED PROTEIN YBAB"/>
    <property type="match status" value="1"/>
</dbReference>
<dbReference type="Pfam" id="PF02575">
    <property type="entry name" value="YbaB_DNA_bd"/>
    <property type="match status" value="1"/>
</dbReference>
<dbReference type="PIRSF" id="PIRSF004555">
    <property type="entry name" value="UCP004555"/>
    <property type="match status" value="1"/>
</dbReference>
<dbReference type="SUPFAM" id="SSF82607">
    <property type="entry name" value="YbaB-like"/>
    <property type="match status" value="1"/>
</dbReference>
<reference key="1">
    <citation type="submission" date="2008-02" db="EMBL/GenBank/DDBJ databases">
        <title>Complete sequence of chromosome 1 of Burkholderia cenocepacia MC0-3.</title>
        <authorList>
            <person name="Copeland A."/>
            <person name="Lucas S."/>
            <person name="Lapidus A."/>
            <person name="Barry K."/>
            <person name="Bruce D."/>
            <person name="Goodwin L."/>
            <person name="Glavina del Rio T."/>
            <person name="Dalin E."/>
            <person name="Tice H."/>
            <person name="Pitluck S."/>
            <person name="Chain P."/>
            <person name="Malfatti S."/>
            <person name="Shin M."/>
            <person name="Vergez L."/>
            <person name="Schmutz J."/>
            <person name="Larimer F."/>
            <person name="Land M."/>
            <person name="Hauser L."/>
            <person name="Kyrpides N."/>
            <person name="Mikhailova N."/>
            <person name="Tiedje J."/>
            <person name="Richardson P."/>
        </authorList>
    </citation>
    <scope>NUCLEOTIDE SEQUENCE [LARGE SCALE GENOMIC DNA]</scope>
    <source>
        <strain>MC0-3</strain>
    </source>
</reference>
<gene>
    <name type="ordered locus">Bcenmc03_1850</name>
</gene>
<organism>
    <name type="scientific">Burkholderia orbicola (strain MC0-3)</name>
    <dbReference type="NCBI Taxonomy" id="406425"/>
    <lineage>
        <taxon>Bacteria</taxon>
        <taxon>Pseudomonadati</taxon>
        <taxon>Pseudomonadota</taxon>
        <taxon>Betaproteobacteria</taxon>
        <taxon>Burkholderiales</taxon>
        <taxon>Burkholderiaceae</taxon>
        <taxon>Burkholderia</taxon>
        <taxon>Burkholderia cepacia complex</taxon>
        <taxon>Burkholderia orbicola</taxon>
    </lineage>
</organism>
<comment type="function">
    <text evidence="1">Binds to DNA and alters its conformation. May be involved in regulation of gene expression, nucleoid organization and DNA protection.</text>
</comment>
<comment type="subunit">
    <text evidence="1">Homodimer.</text>
</comment>
<comment type="subcellular location">
    <subcellularLocation>
        <location evidence="1">Cytoplasm</location>
        <location evidence="1">Nucleoid</location>
    </subcellularLocation>
</comment>
<comment type="similarity">
    <text evidence="1">Belongs to the YbaB/EbfC family.</text>
</comment>
<evidence type="ECO:0000255" key="1">
    <source>
        <dbReference type="HAMAP-Rule" id="MF_00274"/>
    </source>
</evidence>
<evidence type="ECO:0000256" key="2">
    <source>
        <dbReference type="SAM" id="MobiDB-lite"/>
    </source>
</evidence>
<name>Y1850_BURO0</name>
<sequence length="108" mass="11769">MLKGNLAGLMKQAQQMQENMKKMQEQLALIEVEGQSGAGLVKVTMTCRNEVRRVSIDPSLLADDKDMLEDLVAAAFNDAVRKAEATSQEKMSGMTSGLPLPPGFKLPF</sequence>
<feature type="chain" id="PRO_1000114590" description="Nucleoid-associated protein Bcenmc03_1850">
    <location>
        <begin position="1"/>
        <end position="108"/>
    </location>
</feature>
<feature type="region of interest" description="Disordered" evidence="2">
    <location>
        <begin position="85"/>
        <end position="108"/>
    </location>
</feature>
<feature type="compositionally biased region" description="Polar residues" evidence="2">
    <location>
        <begin position="85"/>
        <end position="95"/>
    </location>
</feature>
<feature type="compositionally biased region" description="Pro residues" evidence="2">
    <location>
        <begin position="99"/>
        <end position="108"/>
    </location>
</feature>